<reference key="1">
    <citation type="submission" date="2004-10" db="EMBL/GenBank/DDBJ databases">
        <title>Felis catus ribosomal protein S7 mRNA.</title>
        <authorList>
            <person name="Pathak S."/>
            <person name="Kapil S."/>
        </authorList>
    </citation>
    <scope>NUCLEOTIDE SEQUENCE [MRNA]</scope>
</reference>
<organism>
    <name type="scientific">Felis catus</name>
    <name type="common">Cat</name>
    <name type="synonym">Felis silvestris catus</name>
    <dbReference type="NCBI Taxonomy" id="9685"/>
    <lineage>
        <taxon>Eukaryota</taxon>
        <taxon>Metazoa</taxon>
        <taxon>Chordata</taxon>
        <taxon>Craniata</taxon>
        <taxon>Vertebrata</taxon>
        <taxon>Euteleostomi</taxon>
        <taxon>Mammalia</taxon>
        <taxon>Eutheria</taxon>
        <taxon>Laurasiatheria</taxon>
        <taxon>Carnivora</taxon>
        <taxon>Feliformia</taxon>
        <taxon>Felidae</taxon>
        <taxon>Felinae</taxon>
        <taxon>Felis</taxon>
    </lineage>
</organism>
<name>RS7_FELCA</name>
<dbReference type="EMBL" id="AY800278">
    <property type="protein sequence ID" value="AAV65144.1"/>
    <property type="molecule type" value="mRNA"/>
</dbReference>
<dbReference type="RefSeq" id="NP_001009832.1">
    <property type="nucleotide sequence ID" value="NM_001009832.1"/>
</dbReference>
<dbReference type="RefSeq" id="XP_023106676.1">
    <property type="nucleotide sequence ID" value="XM_023250908.2"/>
</dbReference>
<dbReference type="SMR" id="Q5RT64"/>
<dbReference type="STRING" id="9685.ENSFCAP00000023928"/>
<dbReference type="Ensembl" id="ENSFCAT00000064439.2">
    <property type="protein sequence ID" value="ENSFCAP00000045813.1"/>
    <property type="gene ID" value="ENSFCAG00000023243.4"/>
</dbReference>
<dbReference type="GeneID" id="493740"/>
<dbReference type="KEGG" id="fca:493740"/>
<dbReference type="CTD" id="6201"/>
<dbReference type="GeneTree" id="ENSGT00390000014122"/>
<dbReference type="InParanoid" id="Q5RT64"/>
<dbReference type="OrthoDB" id="1724687at2759"/>
<dbReference type="Proteomes" id="UP000011712">
    <property type="component" value="Chromosome A3"/>
</dbReference>
<dbReference type="Bgee" id="ENSFCAG00000023243">
    <property type="expression patterns" value="Expressed in eyeball of camera-type eye and 11 other cell types or tissues"/>
</dbReference>
<dbReference type="GO" id="GO:0005813">
    <property type="term" value="C:centrosome"/>
    <property type="evidence" value="ECO:0007669"/>
    <property type="project" value="UniProtKB-SubCell"/>
</dbReference>
<dbReference type="GO" id="GO:0022627">
    <property type="term" value="C:cytosolic small ribosomal subunit"/>
    <property type="evidence" value="ECO:0000318"/>
    <property type="project" value="GO_Central"/>
</dbReference>
<dbReference type="GO" id="GO:0005730">
    <property type="term" value="C:nucleolus"/>
    <property type="evidence" value="ECO:0007669"/>
    <property type="project" value="UniProtKB-SubCell"/>
</dbReference>
<dbReference type="GO" id="GO:0032040">
    <property type="term" value="C:small-subunit processome"/>
    <property type="evidence" value="ECO:0000250"/>
    <property type="project" value="UniProtKB"/>
</dbReference>
<dbReference type="GO" id="GO:0003735">
    <property type="term" value="F:structural constituent of ribosome"/>
    <property type="evidence" value="ECO:0007669"/>
    <property type="project" value="InterPro"/>
</dbReference>
<dbReference type="GO" id="GO:0042274">
    <property type="term" value="P:ribosomal small subunit biogenesis"/>
    <property type="evidence" value="ECO:0000250"/>
    <property type="project" value="UniProtKB"/>
</dbReference>
<dbReference type="GO" id="GO:0006364">
    <property type="term" value="P:rRNA processing"/>
    <property type="evidence" value="ECO:0000318"/>
    <property type="project" value="GO_Central"/>
</dbReference>
<dbReference type="GO" id="GO:0006412">
    <property type="term" value="P:translation"/>
    <property type="evidence" value="ECO:0007669"/>
    <property type="project" value="InterPro"/>
</dbReference>
<dbReference type="InterPro" id="IPR000554">
    <property type="entry name" value="Ribosomal_eS7"/>
</dbReference>
<dbReference type="InterPro" id="IPR047861">
    <property type="entry name" value="Ribosomal_eS7_CS"/>
</dbReference>
<dbReference type="PANTHER" id="PTHR11278">
    <property type="entry name" value="40S RIBOSOMAL PROTEIN S7"/>
    <property type="match status" value="1"/>
</dbReference>
<dbReference type="PANTHER" id="PTHR11278:SF0">
    <property type="entry name" value="SMALL RIBOSOMAL SUBUNIT PROTEIN ES7"/>
    <property type="match status" value="1"/>
</dbReference>
<dbReference type="Pfam" id="PF01251">
    <property type="entry name" value="Ribosomal_S7e"/>
    <property type="match status" value="1"/>
</dbReference>
<dbReference type="PROSITE" id="PS00948">
    <property type="entry name" value="RIBOSOMAL_S7E"/>
    <property type="match status" value="1"/>
</dbReference>
<gene>
    <name type="primary">RPS7</name>
</gene>
<keyword id="KW-0007">Acetylation</keyword>
<keyword id="KW-0963">Cytoplasm</keyword>
<keyword id="KW-0206">Cytoskeleton</keyword>
<keyword id="KW-1017">Isopeptide bond</keyword>
<keyword id="KW-0539">Nucleus</keyword>
<keyword id="KW-1185">Reference proteome</keyword>
<keyword id="KW-0687">Ribonucleoprotein</keyword>
<keyword id="KW-0689">Ribosomal protein</keyword>
<keyword id="KW-0832">Ubl conjugation</keyword>
<evidence type="ECO:0000250" key="1"/>
<evidence type="ECO:0000250" key="2">
    <source>
        <dbReference type="UniProtKB" id="P62081"/>
    </source>
</evidence>
<evidence type="ECO:0000305" key="3"/>
<feature type="chain" id="PRO_0000174189" description="Small ribosomal subunit protein eS7">
    <location>
        <begin position="1"/>
        <end position="194"/>
    </location>
</feature>
<feature type="modified residue" description="N-acetylmethionine" evidence="2">
    <location>
        <position position="1"/>
    </location>
</feature>
<feature type="modified residue" description="N6-acetyllysine; alternate" evidence="2">
    <location>
        <position position="74"/>
    </location>
</feature>
<feature type="cross-link" description="Glycyl lysine isopeptide (Lys-Gly) (interchain with G-Cter in SUMO2)" evidence="2">
    <location>
        <position position="70"/>
    </location>
</feature>
<feature type="cross-link" description="Glycyl lysine isopeptide (Lys-Gly) (interchain with G-Cter in SUMO2); alternate" evidence="2">
    <location>
        <position position="74"/>
    </location>
</feature>
<accession>Q5RT64</accession>
<protein>
    <recommendedName>
        <fullName evidence="3">Small ribosomal subunit protein eS7</fullName>
    </recommendedName>
    <alternativeName>
        <fullName>40S ribosomal protein S7</fullName>
    </alternativeName>
</protein>
<comment type="function">
    <text evidence="2">Component of the small ribosomal subunit. The ribosome is a large ribonucleoprotein complex responsible for the synthesis of proteins in the cell. Required for rRNA maturation. Part of the small subunit (SSU) processome, first precursor of the small eukaryotic ribosomal subunit. During the assembly of the SSU processome in the nucleolus, many ribosome biogenesis factors, an RNA chaperone and ribosomal proteins associate with the nascent pre-rRNA and work in concert to generate RNA folding, modifications, rearrangements and cleavage as well as targeted degradation of pre-ribosomal RNA by the RNA exosome.</text>
</comment>
<comment type="subunit">
    <text evidence="2">Component of the small ribosomal subunit. Part of the small subunit (SSU) processome, composed of more than 70 proteins and the RNA chaperone small nucleolar RNA (snoRNA) U3. Binds IPO9 with high affinity. Interacts with NEK6. Interacts with DESI2. Interacts with IPO5, IPO7 and KPNB1; these interactions may be involved in RPS7 nuclear import for the assembly of ribosomal subunits.</text>
</comment>
<comment type="subcellular location">
    <subcellularLocation>
        <location evidence="2">Cytoplasm</location>
        <location evidence="2">Cytoskeleton</location>
        <location evidence="2">Microtubule organizing center</location>
        <location evidence="2">Centrosome</location>
    </subcellularLocation>
    <subcellularLocation>
        <location evidence="2">Cytoplasm</location>
    </subcellularLocation>
    <subcellularLocation>
        <location evidence="2">Nucleus</location>
        <location evidence="2">Nucleolus</location>
    </subcellularLocation>
    <text evidence="2">Although RPS7 is functional within the cytoplasm, the assembly of ribosomal subunits occurs in the nucleus. RPS7 nuclear import is mediated by IPO5/RanBP5, IPO7/RanBP7, KPNB1/importin-beta or TPNO1/Trn. Colocalizes with NEK6 in the centrosome.</text>
</comment>
<comment type="PTM">
    <text evidence="1">Phosphorylated by NEK6.</text>
</comment>
<comment type="similarity">
    <text evidence="3">Belongs to the eukaryotic ribosomal protein eS7 family.</text>
</comment>
<sequence length="194" mass="22127">MFSSSAKIVKPNGEKPDEFESGISQALLELEMNSDLKAQLRELNITAAKEIEVGGGRKAIIIFVPVPQLKSFQKIQVRLVRELEKKFSGKHVVFIAQRRILPKPTRKSRTKNKQKRPRSRTLTAVHDAILEDLVFPSEIVGKRIRVKLDGSRLIKVHLDKAQQNNVEHKVETFSGVYKKLTGKDVNFEFPEFQL</sequence>
<proteinExistence type="evidence at transcript level"/>